<sequence length="205" mass="22583">MLSTDFEYPLWESLSQVCGIDEAGRGPLAGPVVAAAVVFPRHFRPTGIFAKLDDSKKLTAELRDELALAIRESAESWALGVVDAETIDRINILQATMLAMNLAVESLGSTPEFLLVDGNRFRPVLPIPYQTIVKGDSKVFSIAAASVLAKTHRDELMTTSAAEYPEYGFEVHFGYPTARHVEAIARHGRCAIHRQSFKLRKLGEK</sequence>
<reference key="1">
    <citation type="journal article" date="2002" name="Proc. Natl. Acad. Sci. U.S.A.">
        <title>The complete genome sequence of Chlorobium tepidum TLS, a photosynthetic, anaerobic, green-sulfur bacterium.</title>
        <authorList>
            <person name="Eisen J.A."/>
            <person name="Nelson K.E."/>
            <person name="Paulsen I.T."/>
            <person name="Heidelberg J.F."/>
            <person name="Wu M."/>
            <person name="Dodson R.J."/>
            <person name="DeBoy R.T."/>
            <person name="Gwinn M.L."/>
            <person name="Nelson W.C."/>
            <person name="Haft D.H."/>
            <person name="Hickey E.K."/>
            <person name="Peterson J.D."/>
            <person name="Durkin A.S."/>
            <person name="Kolonay J.F."/>
            <person name="Yang F."/>
            <person name="Holt I.E."/>
            <person name="Umayam L.A."/>
            <person name="Mason T.M."/>
            <person name="Brenner M."/>
            <person name="Shea T.P."/>
            <person name="Parksey D.S."/>
            <person name="Nierman W.C."/>
            <person name="Feldblyum T.V."/>
            <person name="Hansen C.L."/>
            <person name="Craven M.B."/>
            <person name="Radune D."/>
            <person name="Vamathevan J.J."/>
            <person name="Khouri H.M."/>
            <person name="White O."/>
            <person name="Gruber T.M."/>
            <person name="Ketchum K.A."/>
            <person name="Venter J.C."/>
            <person name="Tettelin H."/>
            <person name="Bryant D.A."/>
            <person name="Fraser C.M."/>
        </authorList>
    </citation>
    <scope>NUCLEOTIDE SEQUENCE [LARGE SCALE GENOMIC DNA]</scope>
    <source>
        <strain>ATCC 49652 / DSM 12025 / NBRC 103806 / TLS</strain>
    </source>
</reference>
<accession>Q8KAA5</accession>
<dbReference type="EC" id="3.1.26.4" evidence="1"/>
<dbReference type="EMBL" id="AE006470">
    <property type="protein sequence ID" value="AAM73476.1"/>
    <property type="molecule type" value="Genomic_DNA"/>
</dbReference>
<dbReference type="RefSeq" id="NP_663134.1">
    <property type="nucleotide sequence ID" value="NC_002932.3"/>
</dbReference>
<dbReference type="RefSeq" id="WP_010933911.1">
    <property type="nucleotide sequence ID" value="NC_002932.3"/>
</dbReference>
<dbReference type="SMR" id="Q8KAA5"/>
<dbReference type="STRING" id="194439.CT2261"/>
<dbReference type="EnsemblBacteria" id="AAM73476">
    <property type="protein sequence ID" value="AAM73476"/>
    <property type="gene ID" value="CT2261"/>
</dbReference>
<dbReference type="KEGG" id="cte:CT2261"/>
<dbReference type="PATRIC" id="fig|194439.7.peg.2056"/>
<dbReference type="eggNOG" id="COG0164">
    <property type="taxonomic scope" value="Bacteria"/>
</dbReference>
<dbReference type="HOGENOM" id="CLU_036532_3_2_10"/>
<dbReference type="OrthoDB" id="9803420at2"/>
<dbReference type="Proteomes" id="UP000001007">
    <property type="component" value="Chromosome"/>
</dbReference>
<dbReference type="GO" id="GO:0005737">
    <property type="term" value="C:cytoplasm"/>
    <property type="evidence" value="ECO:0007669"/>
    <property type="project" value="UniProtKB-SubCell"/>
</dbReference>
<dbReference type="GO" id="GO:0032299">
    <property type="term" value="C:ribonuclease H2 complex"/>
    <property type="evidence" value="ECO:0007669"/>
    <property type="project" value="TreeGrafter"/>
</dbReference>
<dbReference type="GO" id="GO:0030145">
    <property type="term" value="F:manganese ion binding"/>
    <property type="evidence" value="ECO:0007669"/>
    <property type="project" value="UniProtKB-UniRule"/>
</dbReference>
<dbReference type="GO" id="GO:0003723">
    <property type="term" value="F:RNA binding"/>
    <property type="evidence" value="ECO:0007669"/>
    <property type="project" value="InterPro"/>
</dbReference>
<dbReference type="GO" id="GO:0004523">
    <property type="term" value="F:RNA-DNA hybrid ribonuclease activity"/>
    <property type="evidence" value="ECO:0007669"/>
    <property type="project" value="UniProtKB-UniRule"/>
</dbReference>
<dbReference type="GO" id="GO:0043137">
    <property type="term" value="P:DNA replication, removal of RNA primer"/>
    <property type="evidence" value="ECO:0007669"/>
    <property type="project" value="TreeGrafter"/>
</dbReference>
<dbReference type="GO" id="GO:0006298">
    <property type="term" value="P:mismatch repair"/>
    <property type="evidence" value="ECO:0007669"/>
    <property type="project" value="TreeGrafter"/>
</dbReference>
<dbReference type="CDD" id="cd07182">
    <property type="entry name" value="RNase_HII_bacteria_HII_like"/>
    <property type="match status" value="1"/>
</dbReference>
<dbReference type="Gene3D" id="3.30.420.10">
    <property type="entry name" value="Ribonuclease H-like superfamily/Ribonuclease H"/>
    <property type="match status" value="1"/>
</dbReference>
<dbReference type="HAMAP" id="MF_00052_B">
    <property type="entry name" value="RNase_HII_B"/>
    <property type="match status" value="1"/>
</dbReference>
<dbReference type="InterPro" id="IPR022898">
    <property type="entry name" value="RNase_HII"/>
</dbReference>
<dbReference type="InterPro" id="IPR001352">
    <property type="entry name" value="RNase_HII/HIII"/>
</dbReference>
<dbReference type="InterPro" id="IPR024567">
    <property type="entry name" value="RNase_HII/HIII_dom"/>
</dbReference>
<dbReference type="InterPro" id="IPR012337">
    <property type="entry name" value="RNaseH-like_sf"/>
</dbReference>
<dbReference type="InterPro" id="IPR036397">
    <property type="entry name" value="RNaseH_sf"/>
</dbReference>
<dbReference type="NCBIfam" id="NF000595">
    <property type="entry name" value="PRK00015.1-3"/>
    <property type="match status" value="1"/>
</dbReference>
<dbReference type="PANTHER" id="PTHR10954">
    <property type="entry name" value="RIBONUCLEASE H2 SUBUNIT A"/>
    <property type="match status" value="1"/>
</dbReference>
<dbReference type="PANTHER" id="PTHR10954:SF18">
    <property type="entry name" value="RIBONUCLEASE HII"/>
    <property type="match status" value="1"/>
</dbReference>
<dbReference type="Pfam" id="PF01351">
    <property type="entry name" value="RNase_HII"/>
    <property type="match status" value="1"/>
</dbReference>
<dbReference type="SUPFAM" id="SSF53098">
    <property type="entry name" value="Ribonuclease H-like"/>
    <property type="match status" value="1"/>
</dbReference>
<dbReference type="PROSITE" id="PS51975">
    <property type="entry name" value="RNASE_H_2"/>
    <property type="match status" value="1"/>
</dbReference>
<comment type="function">
    <text evidence="1">Endonuclease that specifically degrades the RNA of RNA-DNA hybrids.</text>
</comment>
<comment type="catalytic activity">
    <reaction evidence="1">
        <text>Endonucleolytic cleavage to 5'-phosphomonoester.</text>
        <dbReference type="EC" id="3.1.26.4"/>
    </reaction>
</comment>
<comment type="cofactor">
    <cofactor evidence="1">
        <name>Mn(2+)</name>
        <dbReference type="ChEBI" id="CHEBI:29035"/>
    </cofactor>
    <cofactor evidence="1">
        <name>Mg(2+)</name>
        <dbReference type="ChEBI" id="CHEBI:18420"/>
    </cofactor>
    <text evidence="1">Manganese or magnesium. Binds 1 divalent metal ion per monomer in the absence of substrate. May bind a second metal ion after substrate binding.</text>
</comment>
<comment type="subcellular location">
    <subcellularLocation>
        <location evidence="1">Cytoplasm</location>
    </subcellularLocation>
</comment>
<comment type="similarity">
    <text evidence="1">Belongs to the RNase HII family.</text>
</comment>
<evidence type="ECO:0000255" key="1">
    <source>
        <dbReference type="HAMAP-Rule" id="MF_00052"/>
    </source>
</evidence>
<evidence type="ECO:0000255" key="2">
    <source>
        <dbReference type="PROSITE-ProRule" id="PRU01319"/>
    </source>
</evidence>
<protein>
    <recommendedName>
        <fullName evidence="1">Ribonuclease HII</fullName>
        <shortName evidence="1">RNase HII</shortName>
        <ecNumber evidence="1">3.1.26.4</ecNumber>
    </recommendedName>
</protein>
<proteinExistence type="inferred from homology"/>
<keyword id="KW-0963">Cytoplasm</keyword>
<keyword id="KW-0255">Endonuclease</keyword>
<keyword id="KW-0378">Hydrolase</keyword>
<keyword id="KW-0464">Manganese</keyword>
<keyword id="KW-0479">Metal-binding</keyword>
<keyword id="KW-0540">Nuclease</keyword>
<keyword id="KW-1185">Reference proteome</keyword>
<organism>
    <name type="scientific">Chlorobaculum tepidum (strain ATCC 49652 / DSM 12025 / NBRC 103806 / TLS)</name>
    <name type="common">Chlorobium tepidum</name>
    <dbReference type="NCBI Taxonomy" id="194439"/>
    <lineage>
        <taxon>Bacteria</taxon>
        <taxon>Pseudomonadati</taxon>
        <taxon>Chlorobiota</taxon>
        <taxon>Chlorobiia</taxon>
        <taxon>Chlorobiales</taxon>
        <taxon>Chlorobiaceae</taxon>
        <taxon>Chlorobaculum</taxon>
    </lineage>
</organism>
<feature type="chain" id="PRO_0000111561" description="Ribonuclease HII">
    <location>
        <begin position="1"/>
        <end position="205"/>
    </location>
</feature>
<feature type="domain" description="RNase H type-2" evidence="2">
    <location>
        <begin position="15"/>
        <end position="205"/>
    </location>
</feature>
<feature type="binding site" evidence="1">
    <location>
        <position position="21"/>
    </location>
    <ligand>
        <name>a divalent metal cation</name>
        <dbReference type="ChEBI" id="CHEBI:60240"/>
    </ligand>
</feature>
<feature type="binding site" evidence="1">
    <location>
        <position position="22"/>
    </location>
    <ligand>
        <name>a divalent metal cation</name>
        <dbReference type="ChEBI" id="CHEBI:60240"/>
    </ligand>
</feature>
<feature type="binding site" evidence="1">
    <location>
        <position position="117"/>
    </location>
    <ligand>
        <name>a divalent metal cation</name>
        <dbReference type="ChEBI" id="CHEBI:60240"/>
    </ligand>
</feature>
<gene>
    <name evidence="1" type="primary">rnhB</name>
    <name type="ordered locus">CT2261</name>
</gene>
<name>RNH2_CHLTE</name>